<evidence type="ECO:0000255" key="1">
    <source>
        <dbReference type="HAMAP-Rule" id="MF_00204"/>
    </source>
</evidence>
<evidence type="ECO:0000256" key="2">
    <source>
        <dbReference type="SAM" id="MobiDB-lite"/>
    </source>
</evidence>
<dbReference type="EMBL" id="AM711867">
    <property type="protein sequence ID" value="CAN01806.1"/>
    <property type="molecule type" value="Genomic_DNA"/>
</dbReference>
<dbReference type="RefSeq" id="WP_012038438.1">
    <property type="nucleotide sequence ID" value="NC_009480.1"/>
</dbReference>
<dbReference type="SMR" id="A5CRU3"/>
<dbReference type="KEGG" id="cmi:CMM_1750"/>
<dbReference type="eggNOG" id="COG0556">
    <property type="taxonomic scope" value="Bacteria"/>
</dbReference>
<dbReference type="HOGENOM" id="CLU_009621_2_1_11"/>
<dbReference type="OrthoDB" id="9806651at2"/>
<dbReference type="Proteomes" id="UP000001564">
    <property type="component" value="Chromosome"/>
</dbReference>
<dbReference type="GO" id="GO:0005737">
    <property type="term" value="C:cytoplasm"/>
    <property type="evidence" value="ECO:0007669"/>
    <property type="project" value="UniProtKB-SubCell"/>
</dbReference>
<dbReference type="GO" id="GO:0009380">
    <property type="term" value="C:excinuclease repair complex"/>
    <property type="evidence" value="ECO:0007669"/>
    <property type="project" value="InterPro"/>
</dbReference>
<dbReference type="GO" id="GO:0005524">
    <property type="term" value="F:ATP binding"/>
    <property type="evidence" value="ECO:0007669"/>
    <property type="project" value="UniProtKB-UniRule"/>
</dbReference>
<dbReference type="GO" id="GO:0016887">
    <property type="term" value="F:ATP hydrolysis activity"/>
    <property type="evidence" value="ECO:0007669"/>
    <property type="project" value="InterPro"/>
</dbReference>
<dbReference type="GO" id="GO:0003677">
    <property type="term" value="F:DNA binding"/>
    <property type="evidence" value="ECO:0007669"/>
    <property type="project" value="UniProtKB-UniRule"/>
</dbReference>
<dbReference type="GO" id="GO:0009381">
    <property type="term" value="F:excinuclease ABC activity"/>
    <property type="evidence" value="ECO:0007669"/>
    <property type="project" value="UniProtKB-UniRule"/>
</dbReference>
<dbReference type="GO" id="GO:0004386">
    <property type="term" value="F:helicase activity"/>
    <property type="evidence" value="ECO:0007669"/>
    <property type="project" value="UniProtKB-KW"/>
</dbReference>
<dbReference type="GO" id="GO:0006289">
    <property type="term" value="P:nucleotide-excision repair"/>
    <property type="evidence" value="ECO:0007669"/>
    <property type="project" value="UniProtKB-UniRule"/>
</dbReference>
<dbReference type="GO" id="GO:0009432">
    <property type="term" value="P:SOS response"/>
    <property type="evidence" value="ECO:0007669"/>
    <property type="project" value="UniProtKB-UniRule"/>
</dbReference>
<dbReference type="CDD" id="cd17916">
    <property type="entry name" value="DEXHc_UvrB"/>
    <property type="match status" value="1"/>
</dbReference>
<dbReference type="CDD" id="cd18790">
    <property type="entry name" value="SF2_C_UvrB"/>
    <property type="match status" value="1"/>
</dbReference>
<dbReference type="Gene3D" id="3.40.50.300">
    <property type="entry name" value="P-loop containing nucleotide triphosphate hydrolases"/>
    <property type="match status" value="3"/>
</dbReference>
<dbReference type="Gene3D" id="4.10.860.10">
    <property type="entry name" value="UVR domain"/>
    <property type="match status" value="1"/>
</dbReference>
<dbReference type="HAMAP" id="MF_00204">
    <property type="entry name" value="UvrB"/>
    <property type="match status" value="1"/>
</dbReference>
<dbReference type="InterPro" id="IPR006935">
    <property type="entry name" value="Helicase/UvrB_N"/>
</dbReference>
<dbReference type="InterPro" id="IPR014001">
    <property type="entry name" value="Helicase_ATP-bd"/>
</dbReference>
<dbReference type="InterPro" id="IPR001650">
    <property type="entry name" value="Helicase_C-like"/>
</dbReference>
<dbReference type="InterPro" id="IPR027417">
    <property type="entry name" value="P-loop_NTPase"/>
</dbReference>
<dbReference type="InterPro" id="IPR001943">
    <property type="entry name" value="UVR_dom"/>
</dbReference>
<dbReference type="InterPro" id="IPR036876">
    <property type="entry name" value="UVR_dom_sf"/>
</dbReference>
<dbReference type="InterPro" id="IPR004807">
    <property type="entry name" value="UvrB"/>
</dbReference>
<dbReference type="InterPro" id="IPR041471">
    <property type="entry name" value="UvrB_inter"/>
</dbReference>
<dbReference type="InterPro" id="IPR024759">
    <property type="entry name" value="UvrB_YAD/RRR_dom"/>
</dbReference>
<dbReference type="NCBIfam" id="NF003673">
    <property type="entry name" value="PRK05298.1"/>
    <property type="match status" value="1"/>
</dbReference>
<dbReference type="NCBIfam" id="TIGR00631">
    <property type="entry name" value="uvrb"/>
    <property type="match status" value="1"/>
</dbReference>
<dbReference type="PANTHER" id="PTHR24029">
    <property type="entry name" value="UVRABC SYSTEM PROTEIN B"/>
    <property type="match status" value="1"/>
</dbReference>
<dbReference type="PANTHER" id="PTHR24029:SF0">
    <property type="entry name" value="UVRABC SYSTEM PROTEIN B"/>
    <property type="match status" value="1"/>
</dbReference>
<dbReference type="Pfam" id="PF00271">
    <property type="entry name" value="Helicase_C"/>
    <property type="match status" value="1"/>
</dbReference>
<dbReference type="Pfam" id="PF04851">
    <property type="entry name" value="ResIII"/>
    <property type="match status" value="1"/>
</dbReference>
<dbReference type="Pfam" id="PF02151">
    <property type="entry name" value="UVR"/>
    <property type="match status" value="1"/>
</dbReference>
<dbReference type="Pfam" id="PF12344">
    <property type="entry name" value="UvrB"/>
    <property type="match status" value="1"/>
</dbReference>
<dbReference type="Pfam" id="PF17757">
    <property type="entry name" value="UvrB_inter"/>
    <property type="match status" value="1"/>
</dbReference>
<dbReference type="SMART" id="SM00487">
    <property type="entry name" value="DEXDc"/>
    <property type="match status" value="1"/>
</dbReference>
<dbReference type="SMART" id="SM00490">
    <property type="entry name" value="HELICc"/>
    <property type="match status" value="1"/>
</dbReference>
<dbReference type="SUPFAM" id="SSF46600">
    <property type="entry name" value="C-terminal UvrC-binding domain of UvrB"/>
    <property type="match status" value="1"/>
</dbReference>
<dbReference type="SUPFAM" id="SSF52540">
    <property type="entry name" value="P-loop containing nucleoside triphosphate hydrolases"/>
    <property type="match status" value="2"/>
</dbReference>
<dbReference type="PROSITE" id="PS51192">
    <property type="entry name" value="HELICASE_ATP_BIND_1"/>
    <property type="match status" value="1"/>
</dbReference>
<dbReference type="PROSITE" id="PS51194">
    <property type="entry name" value="HELICASE_CTER"/>
    <property type="match status" value="1"/>
</dbReference>
<dbReference type="PROSITE" id="PS50151">
    <property type="entry name" value="UVR"/>
    <property type="match status" value="1"/>
</dbReference>
<gene>
    <name evidence="1" type="primary">uvrB</name>
    <name type="ordered locus">CMM_1750</name>
</gene>
<sequence length="688" mass="77488">MQPTRSVRPFKVVSDYSPSGDQPTAIAELAGRVNAGEPDVVLLGATGTGKSATAAWLIEKVQRPTLILAHNKTLAAQLATEFRELMPDNAVEYFVSYYDYYQPEAYVPQTDTFIEKDSSVNAEVERLRHSTTNSLLSRRDVVVVSTVSCIYGLGQPEQYMNAMVALQVGMQIDRDTLIRKFVSMQYQRNDVDFSRGNFRVRGDTIEIIPMYEELAIRIEMFGDEIEALYQLHPLTGDVVRKMDSVSVFPGSHYVAETEVMRRAIGTIQQELEERLTVLEREGKLLEAQRLRMRTNFDIEMMQQIGFCSGIENYSRHIDGRDAGEAPHCLLDYFPDDFLVVIDESHVTVPQIGAMFEGDSSRKRTLVEHGFRLPSALDNRPLKWNEFTERVPQTVYMSATPGKYELGMGDGVVEQIIRPTGLIDPAIVVKPTKGQIDDLLEQIRIRVEKDERILVTTLTKKMAEELTDYFAEAGVRVRYLHSDVDTLRRVELLSELRAGVYDVLVGINLLREGLDLPEVSLVAILDADKEGFLRSSTSLIQTIGRAARNVSGEVHMYADVLTDSMKRAIEETDRRREKQVAYNTEHGIDPTPLRKRIADITEILAREGEDTKKMLEGRGGGKRSPTPNLRREGKAAAGANELETIISDLNDQMLQAAGELKFELAARLRDELGDLKRELRQMEKAGHLS</sequence>
<keyword id="KW-0067">ATP-binding</keyword>
<keyword id="KW-0963">Cytoplasm</keyword>
<keyword id="KW-0227">DNA damage</keyword>
<keyword id="KW-0228">DNA excision</keyword>
<keyword id="KW-0234">DNA repair</keyword>
<keyword id="KW-0267">Excision nuclease</keyword>
<keyword id="KW-0347">Helicase</keyword>
<keyword id="KW-0378">Hydrolase</keyword>
<keyword id="KW-0547">Nucleotide-binding</keyword>
<keyword id="KW-0742">SOS response</keyword>
<organism>
    <name type="scientific">Clavibacter michiganensis subsp. michiganensis (strain NCPPB 382)</name>
    <dbReference type="NCBI Taxonomy" id="443906"/>
    <lineage>
        <taxon>Bacteria</taxon>
        <taxon>Bacillati</taxon>
        <taxon>Actinomycetota</taxon>
        <taxon>Actinomycetes</taxon>
        <taxon>Micrococcales</taxon>
        <taxon>Microbacteriaceae</taxon>
        <taxon>Clavibacter</taxon>
    </lineage>
</organism>
<comment type="function">
    <text evidence="1">The UvrABC repair system catalyzes the recognition and processing of DNA lesions. A damage recognition complex composed of 2 UvrA and 2 UvrB subunits scans DNA for abnormalities. Upon binding of the UvrA(2)B(2) complex to a putative damaged site, the DNA wraps around one UvrB monomer. DNA wrap is dependent on ATP binding by UvrB and probably causes local melting of the DNA helix, facilitating insertion of UvrB beta-hairpin between the DNA strands. Then UvrB probes one DNA strand for the presence of a lesion. If a lesion is found the UvrA subunits dissociate and the UvrB-DNA preincision complex is formed. This complex is subsequently bound by UvrC and the second UvrB is released. If no lesion is found, the DNA wraps around the other UvrB subunit that will check the other stand for damage.</text>
</comment>
<comment type="subunit">
    <text evidence="1">Forms a heterotetramer with UvrA during the search for lesions. Interacts with UvrC in an incision complex.</text>
</comment>
<comment type="subcellular location">
    <subcellularLocation>
        <location evidence="1">Cytoplasm</location>
    </subcellularLocation>
</comment>
<comment type="domain">
    <text evidence="1">The beta-hairpin motif is involved in DNA binding.</text>
</comment>
<comment type="similarity">
    <text evidence="1">Belongs to the UvrB family.</text>
</comment>
<name>UVRB_CLAM3</name>
<proteinExistence type="inferred from homology"/>
<reference key="1">
    <citation type="journal article" date="2008" name="J. Bacteriol.">
        <title>The genome sequence of the tomato-pathogenic actinomycete Clavibacter michiganensis subsp. michiganensis NCPPB382 reveals a large island involved in pathogenicity.</title>
        <authorList>
            <person name="Gartemann K.-H."/>
            <person name="Abt B."/>
            <person name="Bekel T."/>
            <person name="Burger A."/>
            <person name="Engemann J."/>
            <person name="Fluegel M."/>
            <person name="Gaigalat L."/>
            <person name="Goesmann A."/>
            <person name="Graefen I."/>
            <person name="Kalinowski J."/>
            <person name="Kaup O."/>
            <person name="Kirchner O."/>
            <person name="Krause L."/>
            <person name="Linke B."/>
            <person name="McHardy A."/>
            <person name="Meyer F."/>
            <person name="Pohle S."/>
            <person name="Rueckert C."/>
            <person name="Schneiker S."/>
            <person name="Zellermann E.-M."/>
            <person name="Puehler A."/>
            <person name="Eichenlaub R."/>
            <person name="Kaiser O."/>
            <person name="Bartels D."/>
        </authorList>
    </citation>
    <scope>NUCLEOTIDE SEQUENCE [LARGE SCALE GENOMIC DNA]</scope>
    <source>
        <strain>NCPPB 382</strain>
    </source>
</reference>
<protein>
    <recommendedName>
        <fullName evidence="1">UvrABC system protein B</fullName>
        <shortName evidence="1">Protein UvrB</shortName>
    </recommendedName>
    <alternativeName>
        <fullName evidence="1">Excinuclease ABC subunit B</fullName>
    </alternativeName>
</protein>
<feature type="chain" id="PRO_1000077875" description="UvrABC system protein B">
    <location>
        <begin position="1"/>
        <end position="688"/>
    </location>
</feature>
<feature type="domain" description="Helicase ATP-binding" evidence="1">
    <location>
        <begin position="31"/>
        <end position="188"/>
    </location>
</feature>
<feature type="domain" description="Helicase C-terminal" evidence="1">
    <location>
        <begin position="434"/>
        <end position="587"/>
    </location>
</feature>
<feature type="domain" description="UVR" evidence="1">
    <location>
        <begin position="642"/>
        <end position="677"/>
    </location>
</feature>
<feature type="region of interest" description="Disordered" evidence="2">
    <location>
        <begin position="607"/>
        <end position="632"/>
    </location>
</feature>
<feature type="short sequence motif" description="Beta-hairpin">
    <location>
        <begin position="97"/>
        <end position="120"/>
    </location>
</feature>
<feature type="binding site" evidence="1">
    <location>
        <begin position="44"/>
        <end position="51"/>
    </location>
    <ligand>
        <name>ATP</name>
        <dbReference type="ChEBI" id="CHEBI:30616"/>
    </ligand>
</feature>
<accession>A5CRU3</accession>